<proteinExistence type="inferred from homology"/>
<sequence length="90" mass="10262">MAIRCEKFVVSGIVQGVGFRYHTSHQGLKLNLVGYAKNLYNGDVEVIACGEPLKIEEFAKWLEQGPKTARVDELKREEITCREYQGFEIL</sequence>
<accession>Q8D994</accession>
<protein>
    <recommendedName>
        <fullName>Acylphosphatase</fullName>
        <ecNumber>3.6.1.7</ecNumber>
    </recommendedName>
    <alternativeName>
        <fullName>Acylphosphate phosphohydrolase</fullName>
    </alternativeName>
</protein>
<comment type="catalytic activity">
    <reaction>
        <text>an acyl phosphate + H2O = a carboxylate + phosphate + H(+)</text>
        <dbReference type="Rhea" id="RHEA:14965"/>
        <dbReference type="ChEBI" id="CHEBI:15377"/>
        <dbReference type="ChEBI" id="CHEBI:15378"/>
        <dbReference type="ChEBI" id="CHEBI:29067"/>
        <dbReference type="ChEBI" id="CHEBI:43474"/>
        <dbReference type="ChEBI" id="CHEBI:59918"/>
        <dbReference type="EC" id="3.6.1.7"/>
    </reaction>
</comment>
<comment type="similarity">
    <text evidence="2">Belongs to the acylphosphatase family.</text>
</comment>
<dbReference type="EC" id="3.6.1.7"/>
<dbReference type="EMBL" id="AE016795">
    <property type="protein sequence ID" value="AAO11056.1"/>
    <property type="molecule type" value="Genomic_DNA"/>
</dbReference>
<dbReference type="RefSeq" id="WP_011080551.1">
    <property type="nucleotide sequence ID" value="NC_004459.3"/>
</dbReference>
<dbReference type="SMR" id="Q8D994"/>
<dbReference type="KEGG" id="vvu:VV1_2711"/>
<dbReference type="HOGENOM" id="CLU_141932_1_2_6"/>
<dbReference type="Proteomes" id="UP000002275">
    <property type="component" value="Chromosome 1"/>
</dbReference>
<dbReference type="GO" id="GO:0003998">
    <property type="term" value="F:acylphosphatase activity"/>
    <property type="evidence" value="ECO:0007669"/>
    <property type="project" value="UniProtKB-EC"/>
</dbReference>
<dbReference type="Gene3D" id="3.30.70.100">
    <property type="match status" value="1"/>
</dbReference>
<dbReference type="InterPro" id="IPR020456">
    <property type="entry name" value="Acylphosphatase"/>
</dbReference>
<dbReference type="InterPro" id="IPR001792">
    <property type="entry name" value="Acylphosphatase-like_dom"/>
</dbReference>
<dbReference type="InterPro" id="IPR036046">
    <property type="entry name" value="Acylphosphatase-like_dom_sf"/>
</dbReference>
<dbReference type="InterPro" id="IPR017968">
    <property type="entry name" value="Acylphosphatase_CS"/>
</dbReference>
<dbReference type="NCBIfam" id="NF011000">
    <property type="entry name" value="PRK14426.1"/>
    <property type="match status" value="1"/>
</dbReference>
<dbReference type="PANTHER" id="PTHR47268">
    <property type="entry name" value="ACYLPHOSPHATASE"/>
    <property type="match status" value="1"/>
</dbReference>
<dbReference type="PANTHER" id="PTHR47268:SF4">
    <property type="entry name" value="ACYLPHOSPHATASE"/>
    <property type="match status" value="1"/>
</dbReference>
<dbReference type="Pfam" id="PF00708">
    <property type="entry name" value="Acylphosphatase"/>
    <property type="match status" value="1"/>
</dbReference>
<dbReference type="SUPFAM" id="SSF54975">
    <property type="entry name" value="Acylphosphatase/BLUF domain-like"/>
    <property type="match status" value="1"/>
</dbReference>
<dbReference type="PROSITE" id="PS00150">
    <property type="entry name" value="ACYLPHOSPHATASE_1"/>
    <property type="match status" value="1"/>
</dbReference>
<dbReference type="PROSITE" id="PS00151">
    <property type="entry name" value="ACYLPHOSPHATASE_2"/>
    <property type="match status" value="1"/>
</dbReference>
<dbReference type="PROSITE" id="PS51160">
    <property type="entry name" value="ACYLPHOSPHATASE_3"/>
    <property type="match status" value="1"/>
</dbReference>
<evidence type="ECO:0000255" key="1">
    <source>
        <dbReference type="PROSITE-ProRule" id="PRU00520"/>
    </source>
</evidence>
<evidence type="ECO:0000305" key="2"/>
<name>ACYP_VIBVU</name>
<organism>
    <name type="scientific">Vibrio vulnificus (strain CMCP6)</name>
    <dbReference type="NCBI Taxonomy" id="216895"/>
    <lineage>
        <taxon>Bacteria</taxon>
        <taxon>Pseudomonadati</taxon>
        <taxon>Pseudomonadota</taxon>
        <taxon>Gammaproteobacteria</taxon>
        <taxon>Vibrionales</taxon>
        <taxon>Vibrionaceae</taxon>
        <taxon>Vibrio</taxon>
    </lineage>
</organism>
<keyword id="KW-0378">Hydrolase</keyword>
<gene>
    <name type="primary">acyP</name>
    <name type="ordered locus">VV1_2711</name>
</gene>
<reference key="1">
    <citation type="submission" date="2002-12" db="EMBL/GenBank/DDBJ databases">
        <title>Complete genome sequence of Vibrio vulnificus CMCP6.</title>
        <authorList>
            <person name="Rhee J.H."/>
            <person name="Kim S.Y."/>
            <person name="Chung S.S."/>
            <person name="Kim J.J."/>
            <person name="Moon Y.H."/>
            <person name="Jeong H."/>
            <person name="Choy H.E."/>
        </authorList>
    </citation>
    <scope>NUCLEOTIDE SEQUENCE [LARGE SCALE GENOMIC DNA]</scope>
    <source>
        <strain>CMCP6</strain>
    </source>
</reference>
<feature type="chain" id="PRO_0000326843" description="Acylphosphatase">
    <location>
        <begin position="1"/>
        <end position="90"/>
    </location>
</feature>
<feature type="domain" description="Acylphosphatase-like" evidence="1">
    <location>
        <begin position="5"/>
        <end position="90"/>
    </location>
</feature>
<feature type="active site" evidence="1">
    <location>
        <position position="20"/>
    </location>
</feature>
<feature type="active site" evidence="1">
    <location>
        <position position="38"/>
    </location>
</feature>